<reference key="1">
    <citation type="journal article" date="1995" name="Physiol. Mol. Plant Pathol.">
        <title>Characterization of a rice gene induced by Pseudomonas syringae pv. syringae: requirement for the bacterial lemA gene function.</title>
        <authorList>
            <person name="Reimmann C."/>
            <person name="Mauch F."/>
            <person name="Dudler R."/>
            <person name="Hofmann C."/>
        </authorList>
        <dbReference type="AGRICOLA" id="IND20452874"/>
    </citation>
    <scope>NUCLEOTIDE SEQUENCE [GENOMIC DNA]</scope>
    <source>
        <strain>cv. IR36</strain>
    </source>
</reference>
<reference key="2">
    <citation type="journal article" date="2005" name="PLoS Biol.">
        <title>The genomes of Oryza sativa: a history of duplications.</title>
        <authorList>
            <person name="Yu J."/>
            <person name="Wang J."/>
            <person name="Lin W."/>
            <person name="Li S."/>
            <person name="Li H."/>
            <person name="Zhou J."/>
            <person name="Ni P."/>
            <person name="Dong W."/>
            <person name="Hu S."/>
            <person name="Zeng C."/>
            <person name="Zhang J."/>
            <person name="Zhang Y."/>
            <person name="Li R."/>
            <person name="Xu Z."/>
            <person name="Li S."/>
            <person name="Li X."/>
            <person name="Zheng H."/>
            <person name="Cong L."/>
            <person name="Lin L."/>
            <person name="Yin J."/>
            <person name="Geng J."/>
            <person name="Li G."/>
            <person name="Shi J."/>
            <person name="Liu J."/>
            <person name="Lv H."/>
            <person name="Li J."/>
            <person name="Wang J."/>
            <person name="Deng Y."/>
            <person name="Ran L."/>
            <person name="Shi X."/>
            <person name="Wang X."/>
            <person name="Wu Q."/>
            <person name="Li C."/>
            <person name="Ren X."/>
            <person name="Wang J."/>
            <person name="Wang X."/>
            <person name="Li D."/>
            <person name="Liu D."/>
            <person name="Zhang X."/>
            <person name="Ji Z."/>
            <person name="Zhao W."/>
            <person name="Sun Y."/>
            <person name="Zhang Z."/>
            <person name="Bao J."/>
            <person name="Han Y."/>
            <person name="Dong L."/>
            <person name="Ji J."/>
            <person name="Chen P."/>
            <person name="Wu S."/>
            <person name="Liu J."/>
            <person name="Xiao Y."/>
            <person name="Bu D."/>
            <person name="Tan J."/>
            <person name="Yang L."/>
            <person name="Ye C."/>
            <person name="Zhang J."/>
            <person name="Xu J."/>
            <person name="Zhou Y."/>
            <person name="Yu Y."/>
            <person name="Zhang B."/>
            <person name="Zhuang S."/>
            <person name="Wei H."/>
            <person name="Liu B."/>
            <person name="Lei M."/>
            <person name="Yu H."/>
            <person name="Li Y."/>
            <person name="Xu H."/>
            <person name="Wei S."/>
            <person name="He X."/>
            <person name="Fang L."/>
            <person name="Zhang Z."/>
            <person name="Zhang Y."/>
            <person name="Huang X."/>
            <person name="Su Z."/>
            <person name="Tong W."/>
            <person name="Li J."/>
            <person name="Tong Z."/>
            <person name="Li S."/>
            <person name="Ye J."/>
            <person name="Wang L."/>
            <person name="Fang L."/>
            <person name="Lei T."/>
            <person name="Chen C.-S."/>
            <person name="Chen H.-C."/>
            <person name="Xu Z."/>
            <person name="Li H."/>
            <person name="Huang H."/>
            <person name="Zhang F."/>
            <person name="Xu H."/>
            <person name="Li N."/>
            <person name="Zhao C."/>
            <person name="Li S."/>
            <person name="Dong L."/>
            <person name="Huang Y."/>
            <person name="Li L."/>
            <person name="Xi Y."/>
            <person name="Qi Q."/>
            <person name="Li W."/>
            <person name="Zhang B."/>
            <person name="Hu W."/>
            <person name="Zhang Y."/>
            <person name="Tian X."/>
            <person name="Jiao Y."/>
            <person name="Liang X."/>
            <person name="Jin J."/>
            <person name="Gao L."/>
            <person name="Zheng W."/>
            <person name="Hao B."/>
            <person name="Liu S.-M."/>
            <person name="Wang W."/>
            <person name="Yuan L."/>
            <person name="Cao M."/>
            <person name="McDermott J."/>
            <person name="Samudrala R."/>
            <person name="Wang J."/>
            <person name="Wong G.K.-S."/>
            <person name="Yang H."/>
        </authorList>
    </citation>
    <scope>NUCLEOTIDE SEQUENCE [LARGE SCALE GENOMIC DNA]</scope>
    <source>
        <strain>cv. 93-11</strain>
    </source>
</reference>
<dbReference type="EC" id="3.1.-.-"/>
<dbReference type="EMBL" id="Z34271">
    <property type="protein sequence ID" value="CAA84025.1"/>
    <property type="molecule type" value="Genomic_DNA"/>
</dbReference>
<dbReference type="EMBL" id="CM000126">
    <property type="status" value="NOT_ANNOTATED_CDS"/>
    <property type="molecule type" value="Genomic_DNA"/>
</dbReference>
<dbReference type="PIR" id="S47086">
    <property type="entry name" value="S47086"/>
</dbReference>
<dbReference type="SMR" id="A2WYS8"/>
<dbReference type="STRING" id="39946.A2WYS8"/>
<dbReference type="ESTHER" id="orysa-pir7a">
    <property type="family name" value="Hydroxynitrile_lyase"/>
</dbReference>
<dbReference type="EnsemblPlants" id="BGIOSGA000172-TA">
    <property type="protein sequence ID" value="BGIOSGA000172-PA"/>
    <property type="gene ID" value="BGIOSGA000172"/>
</dbReference>
<dbReference type="EnsemblPlants" id="OsLiXu_01g0045410.01">
    <property type="protein sequence ID" value="OsLiXu_01g0045410.01"/>
    <property type="gene ID" value="OsLiXu_01g0045410"/>
</dbReference>
<dbReference type="Gramene" id="BGIOSGA000172-TA">
    <property type="protein sequence ID" value="BGIOSGA000172-PA"/>
    <property type="gene ID" value="BGIOSGA000172"/>
</dbReference>
<dbReference type="Gramene" id="OsLiXu_01g0045410.01">
    <property type="protein sequence ID" value="OsLiXu_01g0045410.01"/>
    <property type="gene ID" value="OsLiXu_01g0045410"/>
</dbReference>
<dbReference type="HOGENOM" id="CLU_046066_0_1_1"/>
<dbReference type="OMA" id="HTDIDMH"/>
<dbReference type="Proteomes" id="UP000007015">
    <property type="component" value="Chromosome 1"/>
</dbReference>
<dbReference type="ExpressionAtlas" id="A2WYS8">
    <property type="expression patterns" value="differential"/>
</dbReference>
<dbReference type="GO" id="GO:0080030">
    <property type="term" value="F:methyl indole-3-acetate esterase activity"/>
    <property type="evidence" value="ECO:0007669"/>
    <property type="project" value="TreeGrafter"/>
</dbReference>
<dbReference type="GO" id="GO:0080032">
    <property type="term" value="F:methyl jasmonate esterase activity"/>
    <property type="evidence" value="ECO:0007669"/>
    <property type="project" value="TreeGrafter"/>
</dbReference>
<dbReference type="GO" id="GO:0080031">
    <property type="term" value="F:methyl salicylate esterase activity"/>
    <property type="evidence" value="ECO:0007669"/>
    <property type="project" value="TreeGrafter"/>
</dbReference>
<dbReference type="GO" id="GO:0009694">
    <property type="term" value="P:jasmonic acid metabolic process"/>
    <property type="evidence" value="ECO:0007669"/>
    <property type="project" value="TreeGrafter"/>
</dbReference>
<dbReference type="GO" id="GO:0009696">
    <property type="term" value="P:salicylic acid metabolic process"/>
    <property type="evidence" value="ECO:0007669"/>
    <property type="project" value="TreeGrafter"/>
</dbReference>
<dbReference type="FunFam" id="3.40.50.1820:FF:000051">
    <property type="entry name" value="(S)-hydroxynitrile lyase"/>
    <property type="match status" value="1"/>
</dbReference>
<dbReference type="Gene3D" id="3.40.50.1820">
    <property type="entry name" value="alpha/beta hydrolase"/>
    <property type="match status" value="1"/>
</dbReference>
<dbReference type="InterPro" id="IPR000073">
    <property type="entry name" value="AB_hydrolase_1"/>
</dbReference>
<dbReference type="InterPro" id="IPR029058">
    <property type="entry name" value="AB_hydrolase_fold"/>
</dbReference>
<dbReference type="InterPro" id="IPR045889">
    <property type="entry name" value="MES/HNL"/>
</dbReference>
<dbReference type="PANTHER" id="PTHR10992:SF1035">
    <property type="entry name" value="ESTERASE PIR7A-RELATED"/>
    <property type="match status" value="1"/>
</dbReference>
<dbReference type="PANTHER" id="PTHR10992">
    <property type="entry name" value="METHYLESTERASE FAMILY MEMBER"/>
    <property type="match status" value="1"/>
</dbReference>
<dbReference type="Pfam" id="PF12697">
    <property type="entry name" value="Abhydrolase_6"/>
    <property type="match status" value="1"/>
</dbReference>
<dbReference type="SUPFAM" id="SSF53474">
    <property type="entry name" value="alpha/beta-Hydrolases"/>
    <property type="match status" value="1"/>
</dbReference>
<dbReference type="PROSITE" id="PS00120">
    <property type="entry name" value="LIPASE_SER"/>
    <property type="match status" value="1"/>
</dbReference>
<proteinExistence type="inferred from homology"/>
<protein>
    <recommendedName>
        <fullName>Probable esterase PIR7A</fullName>
        <ecNumber>3.1.-.-</ecNumber>
    </recommendedName>
</protein>
<gene>
    <name type="primary">PIR7A</name>
    <name type="ORF">OsI_004971</name>
</gene>
<sequence>MEDGGKHFVFVHGLGHGAWCWYRVVAALRAAGHRATALDMAAAGAHPARADEVGSLEEYSRPLLDAVAAAAPGERLVLVGHSLGGLSLALAMERFPDKVAAAVFLAACMPAAGKHMGITLEEFMRRIKPDFFMDSKTIVLNTNQEPRTAVLLGPKLLAEKLYNRSPPEDLTLATMLVRPGTNYIDDPIMKDETLLTEGNYGSVKRVFLVAMDDASSDEEMQRWTIDLSPGVEVEELAGADHMAMCSKPRELCDLLLRIAAKYD</sequence>
<feature type="chain" id="PRO_0000295018" description="Probable esterase PIR7A">
    <location>
        <begin position="1"/>
        <end position="263"/>
    </location>
</feature>
<feature type="active site" description="Acyl-ester intermediate">
    <location>
        <position position="82"/>
    </location>
</feature>
<feature type="active site" description="Charge relay system" evidence="1">
    <location>
        <position position="213"/>
    </location>
</feature>
<feature type="active site" description="Charge relay system" evidence="1">
    <location>
        <position position="241"/>
    </location>
</feature>
<feature type="sequence conflict" description="In Ref. 1; CAA84025." evidence="2" ref="1">
    <original>H</original>
    <variation>Y</variation>
    <location>
        <position position="16"/>
    </location>
</feature>
<feature type="sequence conflict" description="In Ref. 1; CAA84025." evidence="2" ref="1">
    <original>T</original>
    <variation>M</variation>
    <location>
        <position position="36"/>
    </location>
</feature>
<name>PIR7A_ORYSI</name>
<accession>A2WYS8</accession>
<accession>Q40708</accession>
<accession>Q942Y8</accession>
<comment type="similarity">
    <text evidence="2">Belongs to the AB hydrolase superfamily.</text>
</comment>
<keyword id="KW-0378">Hydrolase</keyword>
<keyword id="KW-1185">Reference proteome</keyword>
<keyword id="KW-0719">Serine esterase</keyword>
<organism>
    <name type="scientific">Oryza sativa subsp. indica</name>
    <name type="common">Rice</name>
    <dbReference type="NCBI Taxonomy" id="39946"/>
    <lineage>
        <taxon>Eukaryota</taxon>
        <taxon>Viridiplantae</taxon>
        <taxon>Streptophyta</taxon>
        <taxon>Embryophyta</taxon>
        <taxon>Tracheophyta</taxon>
        <taxon>Spermatophyta</taxon>
        <taxon>Magnoliopsida</taxon>
        <taxon>Liliopsida</taxon>
        <taxon>Poales</taxon>
        <taxon>Poaceae</taxon>
        <taxon>BOP clade</taxon>
        <taxon>Oryzoideae</taxon>
        <taxon>Oryzeae</taxon>
        <taxon>Oryzinae</taxon>
        <taxon>Oryza</taxon>
        <taxon>Oryza sativa</taxon>
    </lineage>
</organism>
<evidence type="ECO:0000255" key="1">
    <source>
        <dbReference type="PROSITE-ProRule" id="PRU10037"/>
    </source>
</evidence>
<evidence type="ECO:0000305" key="2"/>